<evidence type="ECO:0000255" key="1">
    <source>
        <dbReference type="HAMAP-Rule" id="MF_00049"/>
    </source>
</evidence>
<name>SYL_BORDL</name>
<proteinExistence type="inferred from homology"/>
<feature type="chain" id="PRO_1000091292" description="Leucine--tRNA ligase">
    <location>
        <begin position="1"/>
        <end position="842"/>
    </location>
</feature>
<feature type="short sequence motif" description="'HIGH' region">
    <location>
        <begin position="44"/>
        <end position="55"/>
    </location>
</feature>
<feature type="short sequence motif" description="'KMSKS' region">
    <location>
        <begin position="619"/>
        <end position="623"/>
    </location>
</feature>
<feature type="binding site" evidence="1">
    <location>
        <position position="622"/>
    </location>
    <ligand>
        <name>ATP</name>
        <dbReference type="ChEBI" id="CHEBI:30616"/>
    </ligand>
</feature>
<dbReference type="EC" id="6.1.1.4" evidence="1"/>
<dbReference type="EMBL" id="CP000976">
    <property type="protein sequence ID" value="ACH93205.1"/>
    <property type="molecule type" value="Genomic_DNA"/>
</dbReference>
<dbReference type="RefSeq" id="WP_012538017.1">
    <property type="nucleotide sequence ID" value="NC_011229.1"/>
</dbReference>
<dbReference type="SMR" id="B5RL76"/>
<dbReference type="STRING" id="412419.BDU_253"/>
<dbReference type="KEGG" id="bdu:BDU_253"/>
<dbReference type="eggNOG" id="COG0495">
    <property type="taxonomic scope" value="Bacteria"/>
</dbReference>
<dbReference type="HOGENOM" id="CLU_004427_0_0_12"/>
<dbReference type="OrthoDB" id="9810365at2"/>
<dbReference type="Proteomes" id="UP000000611">
    <property type="component" value="Chromosome"/>
</dbReference>
<dbReference type="GO" id="GO:0005829">
    <property type="term" value="C:cytosol"/>
    <property type="evidence" value="ECO:0007669"/>
    <property type="project" value="TreeGrafter"/>
</dbReference>
<dbReference type="GO" id="GO:0002161">
    <property type="term" value="F:aminoacyl-tRNA deacylase activity"/>
    <property type="evidence" value="ECO:0007669"/>
    <property type="project" value="InterPro"/>
</dbReference>
<dbReference type="GO" id="GO:0005524">
    <property type="term" value="F:ATP binding"/>
    <property type="evidence" value="ECO:0007669"/>
    <property type="project" value="UniProtKB-UniRule"/>
</dbReference>
<dbReference type="GO" id="GO:0004823">
    <property type="term" value="F:leucine-tRNA ligase activity"/>
    <property type="evidence" value="ECO:0007669"/>
    <property type="project" value="UniProtKB-UniRule"/>
</dbReference>
<dbReference type="GO" id="GO:0006429">
    <property type="term" value="P:leucyl-tRNA aminoacylation"/>
    <property type="evidence" value="ECO:0007669"/>
    <property type="project" value="UniProtKB-UniRule"/>
</dbReference>
<dbReference type="CDD" id="cd07958">
    <property type="entry name" value="Anticodon_Ia_Leu_BEm"/>
    <property type="match status" value="1"/>
</dbReference>
<dbReference type="CDD" id="cd00812">
    <property type="entry name" value="LeuRS_core"/>
    <property type="match status" value="1"/>
</dbReference>
<dbReference type="FunFam" id="1.10.730.10:FF:000002">
    <property type="entry name" value="Leucine--tRNA ligase"/>
    <property type="match status" value="1"/>
</dbReference>
<dbReference type="FunFam" id="3.40.50.620:FF:000056">
    <property type="entry name" value="Leucine--tRNA ligase"/>
    <property type="match status" value="1"/>
</dbReference>
<dbReference type="FunFam" id="3.40.50.620:FF:000077">
    <property type="entry name" value="Leucine--tRNA ligase"/>
    <property type="match status" value="1"/>
</dbReference>
<dbReference type="Gene3D" id="3.40.50.620">
    <property type="entry name" value="HUPs"/>
    <property type="match status" value="2"/>
</dbReference>
<dbReference type="Gene3D" id="1.10.730.10">
    <property type="entry name" value="Isoleucyl-tRNA Synthetase, Domain 1"/>
    <property type="match status" value="1"/>
</dbReference>
<dbReference type="HAMAP" id="MF_00049_B">
    <property type="entry name" value="Leu_tRNA_synth_B"/>
    <property type="match status" value="1"/>
</dbReference>
<dbReference type="InterPro" id="IPR001412">
    <property type="entry name" value="aa-tRNA-synth_I_CS"/>
</dbReference>
<dbReference type="InterPro" id="IPR002300">
    <property type="entry name" value="aa-tRNA-synth_Ia"/>
</dbReference>
<dbReference type="InterPro" id="IPR002302">
    <property type="entry name" value="Leu-tRNA-ligase"/>
</dbReference>
<dbReference type="InterPro" id="IPR025709">
    <property type="entry name" value="Leu_tRNA-synth_edit"/>
</dbReference>
<dbReference type="InterPro" id="IPR013155">
    <property type="entry name" value="M/V/L/I-tRNA-synth_anticd-bd"/>
</dbReference>
<dbReference type="InterPro" id="IPR015413">
    <property type="entry name" value="Methionyl/Leucyl_tRNA_Synth"/>
</dbReference>
<dbReference type="InterPro" id="IPR014729">
    <property type="entry name" value="Rossmann-like_a/b/a_fold"/>
</dbReference>
<dbReference type="InterPro" id="IPR009080">
    <property type="entry name" value="tRNAsynth_Ia_anticodon-bd"/>
</dbReference>
<dbReference type="InterPro" id="IPR009008">
    <property type="entry name" value="Val/Leu/Ile-tRNA-synth_edit"/>
</dbReference>
<dbReference type="NCBIfam" id="TIGR00396">
    <property type="entry name" value="leuS_bact"/>
    <property type="match status" value="1"/>
</dbReference>
<dbReference type="PANTHER" id="PTHR43740:SF2">
    <property type="entry name" value="LEUCINE--TRNA LIGASE, MITOCHONDRIAL"/>
    <property type="match status" value="1"/>
</dbReference>
<dbReference type="PANTHER" id="PTHR43740">
    <property type="entry name" value="LEUCYL-TRNA SYNTHETASE"/>
    <property type="match status" value="1"/>
</dbReference>
<dbReference type="Pfam" id="PF08264">
    <property type="entry name" value="Anticodon_1"/>
    <property type="match status" value="1"/>
</dbReference>
<dbReference type="Pfam" id="PF00133">
    <property type="entry name" value="tRNA-synt_1"/>
    <property type="match status" value="2"/>
</dbReference>
<dbReference type="Pfam" id="PF13603">
    <property type="entry name" value="tRNA-synt_1_2"/>
    <property type="match status" value="1"/>
</dbReference>
<dbReference type="Pfam" id="PF09334">
    <property type="entry name" value="tRNA-synt_1g"/>
    <property type="match status" value="1"/>
</dbReference>
<dbReference type="PRINTS" id="PR00985">
    <property type="entry name" value="TRNASYNTHLEU"/>
</dbReference>
<dbReference type="SUPFAM" id="SSF47323">
    <property type="entry name" value="Anticodon-binding domain of a subclass of class I aminoacyl-tRNA synthetases"/>
    <property type="match status" value="1"/>
</dbReference>
<dbReference type="SUPFAM" id="SSF52374">
    <property type="entry name" value="Nucleotidylyl transferase"/>
    <property type="match status" value="1"/>
</dbReference>
<dbReference type="SUPFAM" id="SSF50677">
    <property type="entry name" value="ValRS/IleRS/LeuRS editing domain"/>
    <property type="match status" value="1"/>
</dbReference>
<dbReference type="PROSITE" id="PS00178">
    <property type="entry name" value="AA_TRNA_LIGASE_I"/>
    <property type="match status" value="1"/>
</dbReference>
<gene>
    <name evidence="1" type="primary">leuS</name>
    <name type="ordered locus">BDU_253</name>
</gene>
<organism>
    <name type="scientific">Borrelia duttonii (strain Ly)</name>
    <dbReference type="NCBI Taxonomy" id="412419"/>
    <lineage>
        <taxon>Bacteria</taxon>
        <taxon>Pseudomonadati</taxon>
        <taxon>Spirochaetota</taxon>
        <taxon>Spirochaetia</taxon>
        <taxon>Spirochaetales</taxon>
        <taxon>Borreliaceae</taxon>
        <taxon>Borrelia</taxon>
    </lineage>
</organism>
<protein>
    <recommendedName>
        <fullName evidence="1">Leucine--tRNA ligase</fullName>
        <ecNumber evidence="1">6.1.1.4</ecNumber>
    </recommendedName>
    <alternativeName>
        <fullName evidence="1">Leucyl-tRNA synthetase</fullName>
        <shortName evidence="1">LeuRS</shortName>
    </alternativeName>
</protein>
<reference key="1">
    <citation type="journal article" date="2008" name="PLoS Genet.">
        <title>The genome of Borrelia recurrentis, the agent of deadly louse-borne relapsing fever, is a degraded subset of tick-borne Borrelia duttonii.</title>
        <authorList>
            <person name="Lescot M."/>
            <person name="Audic S."/>
            <person name="Robert C."/>
            <person name="Nguyen T.T."/>
            <person name="Blanc G."/>
            <person name="Cutler S.J."/>
            <person name="Wincker P."/>
            <person name="Couloux A."/>
            <person name="Claverie J.-M."/>
            <person name="Raoult D."/>
            <person name="Drancourt M."/>
        </authorList>
    </citation>
    <scope>NUCLEOTIDE SEQUENCE [LARGE SCALE GENOMIC DNA]</scope>
    <source>
        <strain>Ly</strain>
    </source>
</reference>
<sequence length="842" mass="98696">MSKYDFKKIEKKWQNYWDKHKTYKVNEDPNVPKEKRIYILDMFPYPSANGLHVGHPEGYTATDILTRYKLLNGFNVLHPMGFDSFGLPAENYAIQTGKHPKKITEKNIEKFKEQIKALGFAYDWDREIKTHDVNYYKWTQWIFLQLYKKGLAYTKEIPVWYCPDLGTVLANEEVIQTPDGPRSERGFHKVERKPLRQWLLKITKYAERLIRDLEEVDWPDSVKEMQKNWIGKSTGVEIEFLIKESKEKIKVFTTRPDTIFGVTYLVLAPEHPMVDKITKDELKPIISKYKDKEILKSDLERTSLEKDKTGIFTGAYAINPITKEEIPIWIGSYILGTYGTGAVMSVPAHDERDFEFAKKYNLPIKQVVSQTGTNEVLIKPFTENGISINTPTEFNNLKTIEVKTKVIKWLIENKMGQEKVNYKLRDWIFSRQRYWGEPIPILFDDNLNEIPLNDDELPLTLPDIENYKPSGTGESPLSKIKDWVNVKRNGKIYKRETNTMPQWAGSCWYYIRYLDPHNKKEFANKEKINYWMPVDLYIGGAEHSVLHLLYARFWHKVLYDLGYVNTKEPFRKLINQGMITSFAYQDENGILIPNDEVEKKDNKFFSKKNNKELKQIIAKMSKSLKNIINPDDIIKEYGADSMRIYEMFMGPLTDSKPWNTQGLIGIFRFLNKIWLIKNKELTNETPPKEIISELHKTIKKVTEDIETLNFNTAISTLMIFINELLKHEKNYLKIFRPISIILSPFAPHLGEELWEFMGEQSSIFKNAKWPKYDLNSIIDDTREIVLQVNGKTKDKIMIKKDTDEETLKKIAFNNQKIIQNINNKQIIKIITVKDKLVNIVAK</sequence>
<keyword id="KW-0030">Aminoacyl-tRNA synthetase</keyword>
<keyword id="KW-0067">ATP-binding</keyword>
<keyword id="KW-0963">Cytoplasm</keyword>
<keyword id="KW-0436">Ligase</keyword>
<keyword id="KW-0547">Nucleotide-binding</keyword>
<keyword id="KW-0648">Protein biosynthesis</keyword>
<comment type="catalytic activity">
    <reaction evidence="1">
        <text>tRNA(Leu) + L-leucine + ATP = L-leucyl-tRNA(Leu) + AMP + diphosphate</text>
        <dbReference type="Rhea" id="RHEA:11688"/>
        <dbReference type="Rhea" id="RHEA-COMP:9613"/>
        <dbReference type="Rhea" id="RHEA-COMP:9622"/>
        <dbReference type="ChEBI" id="CHEBI:30616"/>
        <dbReference type="ChEBI" id="CHEBI:33019"/>
        <dbReference type="ChEBI" id="CHEBI:57427"/>
        <dbReference type="ChEBI" id="CHEBI:78442"/>
        <dbReference type="ChEBI" id="CHEBI:78494"/>
        <dbReference type="ChEBI" id="CHEBI:456215"/>
        <dbReference type="EC" id="6.1.1.4"/>
    </reaction>
</comment>
<comment type="subcellular location">
    <subcellularLocation>
        <location evidence="1">Cytoplasm</location>
    </subcellularLocation>
</comment>
<comment type="similarity">
    <text evidence="1">Belongs to the class-I aminoacyl-tRNA synthetase family.</text>
</comment>
<accession>B5RL76</accession>